<dbReference type="EMBL" id="AL513366">
    <property type="status" value="NOT_ANNOTATED_CDS"/>
    <property type="molecule type" value="Genomic_DNA"/>
</dbReference>
<dbReference type="EMBL" id="BC004181">
    <property type="status" value="NOT_ANNOTATED_CDS"/>
    <property type="molecule type" value="mRNA"/>
</dbReference>
<dbReference type="IntAct" id="P0DW28">
    <property type="interactions" value="23"/>
</dbReference>
<dbReference type="AGR" id="HGNC:9896"/>
<dbReference type="GeneCards" id="RBM10"/>
<dbReference type="HGNC" id="HGNC:9896">
    <property type="gene designation" value="RBM10"/>
</dbReference>
<dbReference type="MalaCards" id="RBM10"/>
<dbReference type="OrthoDB" id="29221at2759"/>
<dbReference type="Proteomes" id="UP000005640">
    <property type="component" value="Chromosome X"/>
</dbReference>
<dbReference type="GO" id="GO:0005730">
    <property type="term" value="C:nucleolus"/>
    <property type="evidence" value="ECO:0000314"/>
    <property type="project" value="UniProtKB"/>
</dbReference>
<dbReference type="GO" id="GO:2000204">
    <property type="term" value="P:negative regulation of ribosomal large subunit export from nucleus"/>
    <property type="evidence" value="ECO:0000314"/>
    <property type="project" value="UniProtKB"/>
</dbReference>
<proteinExistence type="evidence at protein level"/>
<evidence type="ECO:0000256" key="1">
    <source>
        <dbReference type="SAM" id="MobiDB-lite"/>
    </source>
</evidence>
<evidence type="ECO:0000269" key="2">
    <source>
    </source>
</evidence>
<evidence type="ECO:0000303" key="3">
    <source>
    </source>
</evidence>
<evidence type="ECO:0000305" key="4"/>
<evidence type="ECO:0000305" key="5">
    <source>
    </source>
</evidence>
<evidence type="ECO:0000312" key="6">
    <source>
        <dbReference type="HGNC" id="HGNC:9896"/>
    </source>
</evidence>
<accession>P0DW28</accession>
<comment type="function">
    <text evidence="2">Acts as a late-stage inhibitor of pre-60S ribosome assembly by preventing pre-60S ribosome export from nucleus.</text>
</comment>
<comment type="subunit">
    <text evidence="2">Interacts with 60S ribosome assembly factors GTPBP4 and MRTO4.</text>
</comment>
<comment type="subcellular location">
    <subcellularLocation>
        <location evidence="5">Nucleus</location>
        <location evidence="5">Nucleolus</location>
    </subcellularLocation>
</comment>
<comment type="alternative products">
    <event type="alternative splicing"/>
    <event type="alternative initiation"/>
    <isoform>
        <id>P0DW28-1</id>
        <name>Ribosome biogenesis inhibitor MINAS-60</name>
        <sequence type="displayed"/>
    </isoform>
    <isoform>
        <id>P98175-1</id>
        <name>1</name>
        <sequence type="external"/>
    </isoform>
    <isoform>
        <id>P98175-2</id>
        <name>2</name>
        <sequence type="external"/>
    </isoform>
    <isoform>
        <id>P98175-3</id>
        <name>3</name>
        <sequence type="external"/>
    </isoform>
    <isoform>
        <id>P98175-4</id>
        <name>4</name>
        <sequence type="external"/>
    </isoform>
    <isoform>
        <id>P98175-5</id>
        <name>5</name>
        <sequence type="external"/>
    </isoform>
</comment>
<comment type="developmental stage">
    <text evidence="2">Increases at early S phase and peaks during S phase (PubMed:35393574). Decreases by late S phase and is very low during G2/M (PubMed:35393574). At G1, it again increases (PubMed:35393574).</text>
</comment>
<comment type="miscellaneous">
    <text evidence="2">MINAS-60 is the product of an alternative open reading frame (alt-ORF) of transcripts coding for the RBM10 (AC P98175) protein (PubMed:35393574). MINAS-60 and RBM10 ORFs are overlapping and are formed by shifting the reading frame (PubMed:35393574).</text>
</comment>
<keyword id="KW-0024">Alternative initiation</keyword>
<keyword id="KW-0025">Alternative splicing</keyword>
<keyword id="KW-0539">Nucleus</keyword>
<keyword id="KW-1185">Reference proteome</keyword>
<feature type="chain" id="PRO_0000456281" description="Ribosome biogenesis inhibitor MINAS-60">
    <location>
        <begin position="1"/>
        <end position="130"/>
    </location>
</feature>
<feature type="region of interest" description="Disordered" evidence="1">
    <location>
        <begin position="61"/>
        <end position="130"/>
    </location>
</feature>
<feature type="compositionally biased region" description="Basic residues" evidence="1">
    <location>
        <begin position="109"/>
        <end position="130"/>
    </location>
</feature>
<protein>
    <recommendedName>
        <fullName evidence="4">Ribosome biogenesis inhibitor MINAS-60</fullName>
        <shortName evidence="3">MINAS-60</shortName>
    </recommendedName>
</protein>
<name>MNS60_HUMAN</name>
<organism>
    <name type="scientific">Homo sapiens</name>
    <name type="common">Human</name>
    <dbReference type="NCBI Taxonomy" id="9606"/>
    <lineage>
        <taxon>Eukaryota</taxon>
        <taxon>Metazoa</taxon>
        <taxon>Chordata</taxon>
        <taxon>Craniata</taxon>
        <taxon>Vertebrata</taxon>
        <taxon>Euteleostomi</taxon>
        <taxon>Mammalia</taxon>
        <taxon>Eutheria</taxon>
        <taxon>Euarchontoglires</taxon>
        <taxon>Primates</taxon>
        <taxon>Haplorrhini</taxon>
        <taxon>Catarrhini</taxon>
        <taxon>Hominidae</taxon>
        <taxon>Homo</taxon>
    </lineage>
</organism>
<reference key="1">
    <citation type="journal article" date="2005" name="Nature">
        <title>The DNA sequence of the human X chromosome.</title>
        <authorList>
            <person name="Ross M.T."/>
            <person name="Grafham D.V."/>
            <person name="Coffey A.J."/>
            <person name="Scherer S."/>
            <person name="McLay K."/>
            <person name="Muzny D."/>
            <person name="Platzer M."/>
            <person name="Howell G.R."/>
            <person name="Burrows C."/>
            <person name="Bird C.P."/>
            <person name="Frankish A."/>
            <person name="Lovell F.L."/>
            <person name="Howe K.L."/>
            <person name="Ashurst J.L."/>
            <person name="Fulton R.S."/>
            <person name="Sudbrak R."/>
            <person name="Wen G."/>
            <person name="Jones M.C."/>
            <person name="Hurles M.E."/>
            <person name="Andrews T.D."/>
            <person name="Scott C.E."/>
            <person name="Searle S."/>
            <person name="Ramser J."/>
            <person name="Whittaker A."/>
            <person name="Deadman R."/>
            <person name="Carter N.P."/>
            <person name="Hunt S.E."/>
            <person name="Chen R."/>
            <person name="Cree A."/>
            <person name="Gunaratne P."/>
            <person name="Havlak P."/>
            <person name="Hodgson A."/>
            <person name="Metzker M.L."/>
            <person name="Richards S."/>
            <person name="Scott G."/>
            <person name="Steffen D."/>
            <person name="Sodergren E."/>
            <person name="Wheeler D.A."/>
            <person name="Worley K.C."/>
            <person name="Ainscough R."/>
            <person name="Ambrose K.D."/>
            <person name="Ansari-Lari M.A."/>
            <person name="Aradhya S."/>
            <person name="Ashwell R.I."/>
            <person name="Babbage A.K."/>
            <person name="Bagguley C.L."/>
            <person name="Ballabio A."/>
            <person name="Banerjee R."/>
            <person name="Barker G.E."/>
            <person name="Barlow K.F."/>
            <person name="Barrett I.P."/>
            <person name="Bates K.N."/>
            <person name="Beare D.M."/>
            <person name="Beasley H."/>
            <person name="Beasley O."/>
            <person name="Beck A."/>
            <person name="Bethel G."/>
            <person name="Blechschmidt K."/>
            <person name="Brady N."/>
            <person name="Bray-Allen S."/>
            <person name="Bridgeman A.M."/>
            <person name="Brown A.J."/>
            <person name="Brown M.J."/>
            <person name="Bonnin D."/>
            <person name="Bruford E.A."/>
            <person name="Buhay C."/>
            <person name="Burch P."/>
            <person name="Burford D."/>
            <person name="Burgess J."/>
            <person name="Burrill W."/>
            <person name="Burton J."/>
            <person name="Bye J.M."/>
            <person name="Carder C."/>
            <person name="Carrel L."/>
            <person name="Chako J."/>
            <person name="Chapman J.C."/>
            <person name="Chavez D."/>
            <person name="Chen E."/>
            <person name="Chen G."/>
            <person name="Chen Y."/>
            <person name="Chen Z."/>
            <person name="Chinault C."/>
            <person name="Ciccodicola A."/>
            <person name="Clark S.Y."/>
            <person name="Clarke G."/>
            <person name="Clee C.M."/>
            <person name="Clegg S."/>
            <person name="Clerc-Blankenburg K."/>
            <person name="Clifford K."/>
            <person name="Cobley V."/>
            <person name="Cole C.G."/>
            <person name="Conquer J.S."/>
            <person name="Corby N."/>
            <person name="Connor R.E."/>
            <person name="David R."/>
            <person name="Davies J."/>
            <person name="Davis C."/>
            <person name="Davis J."/>
            <person name="Delgado O."/>
            <person name="Deshazo D."/>
            <person name="Dhami P."/>
            <person name="Ding Y."/>
            <person name="Dinh H."/>
            <person name="Dodsworth S."/>
            <person name="Draper H."/>
            <person name="Dugan-Rocha S."/>
            <person name="Dunham A."/>
            <person name="Dunn M."/>
            <person name="Durbin K.J."/>
            <person name="Dutta I."/>
            <person name="Eades T."/>
            <person name="Ellwood M."/>
            <person name="Emery-Cohen A."/>
            <person name="Errington H."/>
            <person name="Evans K.L."/>
            <person name="Faulkner L."/>
            <person name="Francis F."/>
            <person name="Frankland J."/>
            <person name="Fraser A.E."/>
            <person name="Galgoczy P."/>
            <person name="Gilbert J."/>
            <person name="Gill R."/>
            <person name="Gloeckner G."/>
            <person name="Gregory S.G."/>
            <person name="Gribble S."/>
            <person name="Griffiths C."/>
            <person name="Grocock R."/>
            <person name="Gu Y."/>
            <person name="Gwilliam R."/>
            <person name="Hamilton C."/>
            <person name="Hart E.A."/>
            <person name="Hawes A."/>
            <person name="Heath P.D."/>
            <person name="Heitmann K."/>
            <person name="Hennig S."/>
            <person name="Hernandez J."/>
            <person name="Hinzmann B."/>
            <person name="Ho S."/>
            <person name="Hoffs M."/>
            <person name="Howden P.J."/>
            <person name="Huckle E.J."/>
            <person name="Hume J."/>
            <person name="Hunt P.J."/>
            <person name="Hunt A.R."/>
            <person name="Isherwood J."/>
            <person name="Jacob L."/>
            <person name="Johnson D."/>
            <person name="Jones S."/>
            <person name="de Jong P.J."/>
            <person name="Joseph S.S."/>
            <person name="Keenan S."/>
            <person name="Kelly S."/>
            <person name="Kershaw J.K."/>
            <person name="Khan Z."/>
            <person name="Kioschis P."/>
            <person name="Klages S."/>
            <person name="Knights A.J."/>
            <person name="Kosiura A."/>
            <person name="Kovar-Smith C."/>
            <person name="Laird G.K."/>
            <person name="Langford C."/>
            <person name="Lawlor S."/>
            <person name="Leversha M."/>
            <person name="Lewis L."/>
            <person name="Liu W."/>
            <person name="Lloyd C."/>
            <person name="Lloyd D.M."/>
            <person name="Loulseged H."/>
            <person name="Loveland J.E."/>
            <person name="Lovell J.D."/>
            <person name="Lozado R."/>
            <person name="Lu J."/>
            <person name="Lyne R."/>
            <person name="Ma J."/>
            <person name="Maheshwari M."/>
            <person name="Matthews L.H."/>
            <person name="McDowall J."/>
            <person name="McLaren S."/>
            <person name="McMurray A."/>
            <person name="Meidl P."/>
            <person name="Meitinger T."/>
            <person name="Milne S."/>
            <person name="Miner G."/>
            <person name="Mistry S.L."/>
            <person name="Morgan M."/>
            <person name="Morris S."/>
            <person name="Mueller I."/>
            <person name="Mullikin J.C."/>
            <person name="Nguyen N."/>
            <person name="Nordsiek G."/>
            <person name="Nyakatura G."/>
            <person name="O'dell C.N."/>
            <person name="Okwuonu G."/>
            <person name="Palmer S."/>
            <person name="Pandian R."/>
            <person name="Parker D."/>
            <person name="Parrish J."/>
            <person name="Pasternak S."/>
            <person name="Patel D."/>
            <person name="Pearce A.V."/>
            <person name="Pearson D.M."/>
            <person name="Pelan S.E."/>
            <person name="Perez L."/>
            <person name="Porter K.M."/>
            <person name="Ramsey Y."/>
            <person name="Reichwald K."/>
            <person name="Rhodes S."/>
            <person name="Ridler K.A."/>
            <person name="Schlessinger D."/>
            <person name="Schueler M.G."/>
            <person name="Sehra H.K."/>
            <person name="Shaw-Smith C."/>
            <person name="Shen H."/>
            <person name="Sheridan E.M."/>
            <person name="Shownkeen R."/>
            <person name="Skuce C.D."/>
            <person name="Smith M.L."/>
            <person name="Sotheran E.C."/>
            <person name="Steingruber H.E."/>
            <person name="Steward C.A."/>
            <person name="Storey R."/>
            <person name="Swann R.M."/>
            <person name="Swarbreck D."/>
            <person name="Tabor P.E."/>
            <person name="Taudien S."/>
            <person name="Taylor T."/>
            <person name="Teague B."/>
            <person name="Thomas K."/>
            <person name="Thorpe A."/>
            <person name="Timms K."/>
            <person name="Tracey A."/>
            <person name="Trevanion S."/>
            <person name="Tromans A.C."/>
            <person name="d'Urso M."/>
            <person name="Verduzco D."/>
            <person name="Villasana D."/>
            <person name="Waldron L."/>
            <person name="Wall M."/>
            <person name="Wang Q."/>
            <person name="Warren J."/>
            <person name="Warry G.L."/>
            <person name="Wei X."/>
            <person name="West A."/>
            <person name="Whitehead S.L."/>
            <person name="Whiteley M.N."/>
            <person name="Wilkinson J.E."/>
            <person name="Willey D.L."/>
            <person name="Williams G."/>
            <person name="Williams L."/>
            <person name="Williamson A."/>
            <person name="Williamson H."/>
            <person name="Wilming L."/>
            <person name="Woodmansey R.L."/>
            <person name="Wray P.W."/>
            <person name="Yen J."/>
            <person name="Zhang J."/>
            <person name="Zhou J."/>
            <person name="Zoghbi H."/>
            <person name="Zorilla S."/>
            <person name="Buck D."/>
            <person name="Reinhardt R."/>
            <person name="Poustka A."/>
            <person name="Rosenthal A."/>
            <person name="Lehrach H."/>
            <person name="Meindl A."/>
            <person name="Minx P.J."/>
            <person name="Hillier L.W."/>
            <person name="Willard H.F."/>
            <person name="Wilson R.K."/>
            <person name="Waterston R.H."/>
            <person name="Rice C.M."/>
            <person name="Vaudin M."/>
            <person name="Coulson A."/>
            <person name="Nelson D.L."/>
            <person name="Weinstock G."/>
            <person name="Sulston J.E."/>
            <person name="Durbin R.M."/>
            <person name="Hubbard T."/>
            <person name="Gibbs R.A."/>
            <person name="Beck S."/>
            <person name="Rogers J."/>
            <person name="Bentley D.R."/>
        </authorList>
    </citation>
    <scope>NUCLEOTIDE SEQUENCE [LARGE SCALE GENOMIC DNA]</scope>
</reference>
<reference key="2">
    <citation type="journal article" date="2004" name="Genome Res.">
        <title>The status, quality, and expansion of the NIH full-length cDNA project: the Mammalian Gene Collection (MGC).</title>
        <authorList>
            <consortium name="The MGC Project Team"/>
        </authorList>
    </citation>
    <scope>NUCLEOTIDE SEQUENCE [LARGE SCALE MRNA]</scope>
</reference>
<reference key="3">
    <citation type="journal article" date="2022" name="Nat. Chem. Biol.">
        <title>Nascent alt-protein chemoproteomics reveals a pre-60S assembly checkpoint inhibitor.</title>
        <authorList>
            <person name="Cao X."/>
            <person name="Khitun A."/>
            <person name="Harold C.M."/>
            <person name="Bryant C.J."/>
            <person name="Zheng S.J."/>
            <person name="Baserga S.J."/>
            <person name="Slavoff S.A."/>
        </authorList>
    </citation>
    <scope>FUNCTION</scope>
    <scope>SUBCELLULAR LOCATION</scope>
    <scope>IDENTIFICATION BY MASS SPECTROMETRY</scope>
    <scope>DEVELOPMENTAL STAGE</scope>
    <scope>INTERACTION WITH GTPBP4 AND MRTO4</scope>
</reference>
<gene>
    <name evidence="3 6" type="primary">RBM10</name>
</gene>
<sequence>MKDVVVVVTGLAAMEPLTARRMMVGRTAAETTTTGTWTTVHILASMAARRASMTMTTHLRSRVRRIPTRPPRAPRLSVGGGGGTGTAPPARQASPETATIGTRTIGPSKGRRRRRRRMRRRRRRPVTSSC</sequence>